<sequence length="533" mass="59930">MHSRYRDGALLLAAFLLAYLLPLGFHGLWIPDETRYAQISQEMLHSGNWIAPHFMGLRYFEKPPAGYWLIALGQAVFGENLFGVRIASAISTGLSVLLAYLLAGKIWSDPRKSFASALLFMSFGFVAGQAGYSNLDPQFTLWTNLTLVAFWYAVHSIDRARLVAWTVVGVACGMGFMTKGFLAWALPAIITLPYMLWQRRLTELLRFGPLAVVIAIAVCLPWALAVHQQEPDYWRYFFWHEHIRRFAGDNAQHAQPWWFYLPLLIAACLPWALLLPVTFKQAWQRKSRPDTAFLLLWLVLPLAFLSLSKGKLPTYILPCLLPLALLMADALVEHLNQGRGRALRVNGIVNAALTFLGLLALIYVQLKQPVYENEPMHLLLAVIVLTGWTLTNALQGIRPLTFWALPAVGSWLLIVLLPAALPNDVVYNKTPDQFVARHQAELAACTHLLSNDLGAASALSWRLKRPDITLFNTWGELEYGLGYPDVQGRQVRLQGIDAWVTKARSEGRVGVIMRGKSDEELRELELLPKDGQR</sequence>
<gene>
    <name evidence="1" type="primary">arnT</name>
    <name type="ordered locus">PSPPH_2806</name>
</gene>
<accession>Q48HY9</accession>
<feature type="chain" id="PRO_0000380014" description="Undecaprenyl phosphate-alpha-4-amino-4-deoxy-L-arabinose arabinosyl transferase">
    <location>
        <begin position="1"/>
        <end position="533"/>
    </location>
</feature>
<feature type="transmembrane region" description="Helical" evidence="1">
    <location>
        <begin position="10"/>
        <end position="30"/>
    </location>
</feature>
<feature type="transmembrane region" description="Helical" evidence="1">
    <location>
        <begin position="64"/>
        <end position="84"/>
    </location>
</feature>
<feature type="transmembrane region" description="Helical" evidence="1">
    <location>
        <begin position="86"/>
        <end position="106"/>
    </location>
</feature>
<feature type="transmembrane region" description="Helical" evidence="1">
    <location>
        <begin position="113"/>
        <end position="133"/>
    </location>
</feature>
<feature type="transmembrane region" description="Helical" evidence="1">
    <location>
        <begin position="137"/>
        <end position="157"/>
    </location>
</feature>
<feature type="transmembrane region" description="Helical" evidence="1">
    <location>
        <begin position="170"/>
        <end position="190"/>
    </location>
</feature>
<feature type="transmembrane region" description="Helical" evidence="1">
    <location>
        <begin position="207"/>
        <end position="227"/>
    </location>
</feature>
<feature type="transmembrane region" description="Helical" evidence="1">
    <location>
        <begin position="257"/>
        <end position="277"/>
    </location>
</feature>
<feature type="transmembrane region" description="Helical" evidence="1">
    <location>
        <begin position="290"/>
        <end position="310"/>
    </location>
</feature>
<feature type="transmembrane region" description="Helical" evidence="1">
    <location>
        <begin position="312"/>
        <end position="332"/>
    </location>
</feature>
<feature type="transmembrane region" description="Helical" evidence="1">
    <location>
        <begin position="345"/>
        <end position="365"/>
    </location>
</feature>
<feature type="transmembrane region" description="Helical" evidence="1">
    <location>
        <begin position="377"/>
        <end position="397"/>
    </location>
</feature>
<feature type="transmembrane region" description="Helical" evidence="1">
    <location>
        <begin position="402"/>
        <end position="422"/>
    </location>
</feature>
<keyword id="KW-0997">Cell inner membrane</keyword>
<keyword id="KW-1003">Cell membrane</keyword>
<keyword id="KW-0328">Glycosyltransferase</keyword>
<keyword id="KW-0441">Lipid A biosynthesis</keyword>
<keyword id="KW-0444">Lipid biosynthesis</keyword>
<keyword id="KW-0443">Lipid metabolism</keyword>
<keyword id="KW-0448">Lipopolysaccharide biosynthesis</keyword>
<keyword id="KW-0472">Membrane</keyword>
<keyword id="KW-0808">Transferase</keyword>
<keyword id="KW-0812">Transmembrane</keyword>
<keyword id="KW-1133">Transmembrane helix</keyword>
<comment type="function">
    <text evidence="1">Catalyzes the transfer of the L-Ara4N moiety of the glycolipid undecaprenyl phosphate-alpha-L-Ara4N to lipid A. The modified arabinose is attached to lipid A and is required for resistance to polymyxin and cationic antimicrobial peptides.</text>
</comment>
<comment type="catalytic activity">
    <reaction evidence="1">
        <text>4-amino-4-deoxy-alpha-L-arabinopyranosyl di-trans,octa-cis-undecaprenyl phosphate + lipid IVA = lipid IIA + di-trans,octa-cis-undecaprenyl phosphate.</text>
        <dbReference type="EC" id="2.4.2.43"/>
    </reaction>
</comment>
<comment type="pathway">
    <text evidence="1">Lipopolysaccharide metabolism; 4-amino-4-deoxy-beta-L-arabinose-lipid A biosynthesis.</text>
</comment>
<comment type="subcellular location">
    <subcellularLocation>
        <location evidence="1">Cell inner membrane</location>
        <topology evidence="1">Multi-pass membrane protein</topology>
    </subcellularLocation>
</comment>
<comment type="similarity">
    <text evidence="1">Belongs to the glycosyltransferase 83 family.</text>
</comment>
<dbReference type="EC" id="2.4.2.43" evidence="1"/>
<dbReference type="EMBL" id="CP000058">
    <property type="protein sequence ID" value="AAZ36871.1"/>
    <property type="molecule type" value="Genomic_DNA"/>
</dbReference>
<dbReference type="RefSeq" id="WP_011168797.1">
    <property type="nucleotide sequence ID" value="NC_005773.3"/>
</dbReference>
<dbReference type="SMR" id="Q48HY9"/>
<dbReference type="CAZy" id="GT83">
    <property type="family name" value="Glycosyltransferase Family 83"/>
</dbReference>
<dbReference type="KEGG" id="psp:PSPPH_2806"/>
<dbReference type="eggNOG" id="COG1807">
    <property type="taxonomic scope" value="Bacteria"/>
</dbReference>
<dbReference type="HOGENOM" id="CLU_019200_2_1_6"/>
<dbReference type="UniPathway" id="UPA00037"/>
<dbReference type="Proteomes" id="UP000000551">
    <property type="component" value="Chromosome"/>
</dbReference>
<dbReference type="GO" id="GO:0005886">
    <property type="term" value="C:plasma membrane"/>
    <property type="evidence" value="ECO:0007669"/>
    <property type="project" value="UniProtKB-SubCell"/>
</dbReference>
<dbReference type="GO" id="GO:0103015">
    <property type="term" value="F:4-amino-4-deoxy-L-arabinose transferase activity"/>
    <property type="evidence" value="ECO:0007669"/>
    <property type="project" value="UniProtKB-EC"/>
</dbReference>
<dbReference type="GO" id="GO:0000030">
    <property type="term" value="F:mannosyltransferase activity"/>
    <property type="evidence" value="ECO:0007669"/>
    <property type="project" value="InterPro"/>
</dbReference>
<dbReference type="GO" id="GO:0009245">
    <property type="term" value="P:lipid A biosynthetic process"/>
    <property type="evidence" value="ECO:0007669"/>
    <property type="project" value="UniProtKB-UniRule"/>
</dbReference>
<dbReference type="GO" id="GO:0009103">
    <property type="term" value="P:lipopolysaccharide biosynthetic process"/>
    <property type="evidence" value="ECO:0007669"/>
    <property type="project" value="UniProtKB-KW"/>
</dbReference>
<dbReference type="GO" id="GO:0006493">
    <property type="term" value="P:protein O-linked glycosylation"/>
    <property type="evidence" value="ECO:0007669"/>
    <property type="project" value="InterPro"/>
</dbReference>
<dbReference type="GO" id="GO:0010041">
    <property type="term" value="P:response to iron(III) ion"/>
    <property type="evidence" value="ECO:0007669"/>
    <property type="project" value="TreeGrafter"/>
</dbReference>
<dbReference type="HAMAP" id="MF_01165">
    <property type="entry name" value="ArnT_transfer"/>
    <property type="match status" value="1"/>
</dbReference>
<dbReference type="InterPro" id="IPR022839">
    <property type="entry name" value="ArnT_tfrase"/>
</dbReference>
<dbReference type="InterPro" id="IPR003342">
    <property type="entry name" value="Glyco_trans_39/83"/>
</dbReference>
<dbReference type="InterPro" id="IPR050297">
    <property type="entry name" value="LipidA_mod_glycosyltrf_83"/>
</dbReference>
<dbReference type="NCBIfam" id="NF009784">
    <property type="entry name" value="PRK13279.1"/>
    <property type="match status" value="1"/>
</dbReference>
<dbReference type="PANTHER" id="PTHR33908">
    <property type="entry name" value="MANNOSYLTRANSFERASE YKCB-RELATED"/>
    <property type="match status" value="1"/>
</dbReference>
<dbReference type="PANTHER" id="PTHR33908:SF3">
    <property type="entry name" value="UNDECAPRENYL PHOSPHATE-ALPHA-4-AMINO-4-DEOXY-L-ARABINOSE ARABINOSYL TRANSFERASE"/>
    <property type="match status" value="1"/>
</dbReference>
<dbReference type="Pfam" id="PF02366">
    <property type="entry name" value="PMT"/>
    <property type="match status" value="1"/>
</dbReference>
<evidence type="ECO:0000255" key="1">
    <source>
        <dbReference type="HAMAP-Rule" id="MF_01165"/>
    </source>
</evidence>
<protein>
    <recommendedName>
        <fullName evidence="1">Undecaprenyl phosphate-alpha-4-amino-4-deoxy-L-arabinose arabinosyl transferase</fullName>
        <ecNumber evidence="1">2.4.2.43</ecNumber>
    </recommendedName>
    <alternativeName>
        <fullName evidence="1">4-amino-4-deoxy-L-arabinose lipid A transferase</fullName>
    </alternativeName>
    <alternativeName>
        <fullName evidence="1">Lipid IV(A) 4-amino-4-deoxy-L-arabinosyltransferase</fullName>
    </alternativeName>
    <alternativeName>
        <fullName evidence="1">Undecaprenyl phosphate-alpha-L-Ara4N transferase</fullName>
    </alternativeName>
</protein>
<reference key="1">
    <citation type="journal article" date="2005" name="J. Bacteriol.">
        <title>Whole-genome sequence analysis of Pseudomonas syringae pv. phaseolicola 1448A reveals divergence among pathovars in genes involved in virulence and transposition.</title>
        <authorList>
            <person name="Joardar V."/>
            <person name="Lindeberg M."/>
            <person name="Jackson R.W."/>
            <person name="Selengut J."/>
            <person name="Dodson R."/>
            <person name="Brinkac L.M."/>
            <person name="Daugherty S.C."/>
            <person name="DeBoy R.T."/>
            <person name="Durkin A.S."/>
            <person name="Gwinn Giglio M."/>
            <person name="Madupu R."/>
            <person name="Nelson W.C."/>
            <person name="Rosovitz M.J."/>
            <person name="Sullivan S.A."/>
            <person name="Crabtree J."/>
            <person name="Creasy T."/>
            <person name="Davidsen T.M."/>
            <person name="Haft D.H."/>
            <person name="Zafar N."/>
            <person name="Zhou L."/>
            <person name="Halpin R."/>
            <person name="Holley T."/>
            <person name="Khouri H.M."/>
            <person name="Feldblyum T.V."/>
            <person name="White O."/>
            <person name="Fraser C.M."/>
            <person name="Chatterjee A.K."/>
            <person name="Cartinhour S."/>
            <person name="Schneider D."/>
            <person name="Mansfield J.W."/>
            <person name="Collmer A."/>
            <person name="Buell R."/>
        </authorList>
    </citation>
    <scope>NUCLEOTIDE SEQUENCE [LARGE SCALE GENOMIC DNA]</scope>
    <source>
        <strain>1448A / Race 6</strain>
    </source>
</reference>
<name>ARNT_PSE14</name>
<proteinExistence type="inferred from homology"/>
<organism>
    <name type="scientific">Pseudomonas savastanoi pv. phaseolicola (strain 1448A / Race 6)</name>
    <name type="common">Pseudomonas syringae pv. phaseolicola (strain 1448A / Race 6)</name>
    <dbReference type="NCBI Taxonomy" id="264730"/>
    <lineage>
        <taxon>Bacteria</taxon>
        <taxon>Pseudomonadati</taxon>
        <taxon>Pseudomonadota</taxon>
        <taxon>Gammaproteobacteria</taxon>
        <taxon>Pseudomonadales</taxon>
        <taxon>Pseudomonadaceae</taxon>
        <taxon>Pseudomonas</taxon>
    </lineage>
</organism>